<dbReference type="EMBL" id="DQ002401">
    <property type="protein sequence ID" value="AAY21933.1"/>
    <property type="molecule type" value="mRNA"/>
</dbReference>
<dbReference type="EMBL" id="AK033673">
    <property type="protein sequence ID" value="BAC28422.1"/>
    <property type="molecule type" value="mRNA"/>
</dbReference>
<dbReference type="EMBL" id="BC115632">
    <property type="protein sequence ID" value="AAI15633.1"/>
    <property type="molecule type" value="mRNA"/>
</dbReference>
<dbReference type="EMBL" id="BC115633">
    <property type="protein sequence ID" value="AAI15634.1"/>
    <property type="molecule type" value="mRNA"/>
</dbReference>
<dbReference type="CCDS" id="CCDS27178.1">
    <molecule id="Q4ZJN1-1"/>
</dbReference>
<dbReference type="RefSeq" id="NP_898998.2">
    <molecule id="Q4ZJN1-1"/>
    <property type="nucleotide sequence ID" value="NM_183175.4"/>
</dbReference>
<dbReference type="RefSeq" id="XP_006519046.1">
    <molecule id="Q4ZJN1-2"/>
    <property type="nucleotide sequence ID" value="XM_006518983.3"/>
</dbReference>
<dbReference type="RefSeq" id="XP_006519047.1">
    <molecule id="Q4ZJN1-2"/>
    <property type="nucleotide sequence ID" value="XM_006518984.3"/>
</dbReference>
<dbReference type="SMR" id="Q4ZJN1"/>
<dbReference type="FunCoup" id="Q4ZJN1">
    <property type="interactions" value="297"/>
</dbReference>
<dbReference type="IntAct" id="Q4ZJN1">
    <property type="interactions" value="1"/>
</dbReference>
<dbReference type="STRING" id="10090.ENSMUSP00000025940"/>
<dbReference type="GlyCosmos" id="Q4ZJN1">
    <property type="glycosylation" value="2 sites, No reported glycans"/>
</dbReference>
<dbReference type="GlyGen" id="Q4ZJN1">
    <property type="glycosylation" value="4 sites"/>
</dbReference>
<dbReference type="iPTMnet" id="Q4ZJN1"/>
<dbReference type="PhosphoSitePlus" id="Q4ZJN1"/>
<dbReference type="jPOST" id="Q4ZJN1"/>
<dbReference type="PaxDb" id="10090-ENSMUSP00000025940"/>
<dbReference type="ProteomicsDB" id="265400">
    <molecule id="Q4ZJN1-1"/>
</dbReference>
<dbReference type="ProteomicsDB" id="265401">
    <molecule id="Q4ZJN1-2"/>
</dbReference>
<dbReference type="TopDownProteomics" id="Q4ZJN1-1">
    <molecule id="Q4ZJN1-1"/>
</dbReference>
<dbReference type="DNASU" id="239126"/>
<dbReference type="Ensembl" id="ENSMUST00000025940.7">
    <molecule id="Q4ZJN1-1"/>
    <property type="protein sequence ID" value="ENSMUSP00000025940.7"/>
    <property type="gene ID" value="ENSMUSG00000071347.4"/>
</dbReference>
<dbReference type="GeneID" id="239126"/>
<dbReference type="KEGG" id="mmu:239126"/>
<dbReference type="UCSC" id="uc007uff.2">
    <molecule id="Q4ZJN1-1"/>
    <property type="organism name" value="mouse"/>
</dbReference>
<dbReference type="AGR" id="MGI:3045252"/>
<dbReference type="CTD" id="338872"/>
<dbReference type="MGI" id="MGI:3045252">
    <property type="gene designation" value="C1qtnf9"/>
</dbReference>
<dbReference type="VEuPathDB" id="HostDB:ENSMUSG00000071347"/>
<dbReference type="eggNOG" id="ENOG502QVBU">
    <property type="taxonomic scope" value="Eukaryota"/>
</dbReference>
<dbReference type="GeneTree" id="ENSGT00940000154936"/>
<dbReference type="HOGENOM" id="CLU_001074_0_0_1"/>
<dbReference type="InParanoid" id="Q4ZJN1"/>
<dbReference type="OMA" id="HTKDSYM"/>
<dbReference type="OrthoDB" id="5875591at2759"/>
<dbReference type="PhylomeDB" id="Q4ZJN1"/>
<dbReference type="TreeFam" id="TF334029"/>
<dbReference type="BioGRID-ORCS" id="239126">
    <property type="hits" value="3 hits in 76 CRISPR screens"/>
</dbReference>
<dbReference type="PRO" id="PR:Q4ZJN1"/>
<dbReference type="Proteomes" id="UP000000589">
    <property type="component" value="Chromosome 14"/>
</dbReference>
<dbReference type="RNAct" id="Q4ZJN1">
    <property type="molecule type" value="protein"/>
</dbReference>
<dbReference type="Bgee" id="ENSMUSG00000071347">
    <property type="expression patterns" value="Expressed in interventricular septum and 86 other cell types or tissues"/>
</dbReference>
<dbReference type="GO" id="GO:0005581">
    <property type="term" value="C:collagen trimer"/>
    <property type="evidence" value="ECO:0007669"/>
    <property type="project" value="UniProtKB-KW"/>
</dbReference>
<dbReference type="GO" id="GO:0005615">
    <property type="term" value="C:extracellular space"/>
    <property type="evidence" value="ECO:0000314"/>
    <property type="project" value="MGI"/>
</dbReference>
<dbReference type="GO" id="GO:0005179">
    <property type="term" value="F:hormone activity"/>
    <property type="evidence" value="ECO:0000314"/>
    <property type="project" value="MGI"/>
</dbReference>
<dbReference type="GO" id="GO:0042802">
    <property type="term" value="F:identical protein binding"/>
    <property type="evidence" value="ECO:0000353"/>
    <property type="project" value="MGI"/>
</dbReference>
<dbReference type="GO" id="GO:0097009">
    <property type="term" value="P:energy homeostasis"/>
    <property type="evidence" value="ECO:0000314"/>
    <property type="project" value="MGI"/>
</dbReference>
<dbReference type="GO" id="GO:0019395">
    <property type="term" value="P:fatty acid oxidation"/>
    <property type="evidence" value="ECO:0000314"/>
    <property type="project" value="MGI"/>
</dbReference>
<dbReference type="GO" id="GO:0045792">
    <property type="term" value="P:negative regulation of cell size"/>
    <property type="evidence" value="ECO:0000314"/>
    <property type="project" value="MGI"/>
</dbReference>
<dbReference type="GO" id="GO:1900078">
    <property type="term" value="P:positive regulation of cellular response to insulin stimulus"/>
    <property type="evidence" value="ECO:0000314"/>
    <property type="project" value="MGI"/>
</dbReference>
<dbReference type="FunFam" id="2.60.120.40:FF:000001">
    <property type="entry name" value="Complement C1q B chain"/>
    <property type="match status" value="1"/>
</dbReference>
<dbReference type="Gene3D" id="2.60.120.40">
    <property type="match status" value="1"/>
</dbReference>
<dbReference type="InterPro" id="IPR001073">
    <property type="entry name" value="C1q_dom"/>
</dbReference>
<dbReference type="InterPro" id="IPR008160">
    <property type="entry name" value="Collagen"/>
</dbReference>
<dbReference type="InterPro" id="IPR050392">
    <property type="entry name" value="Collagen/C1q_domain"/>
</dbReference>
<dbReference type="InterPro" id="IPR008983">
    <property type="entry name" value="Tumour_necrosis_fac-like_dom"/>
</dbReference>
<dbReference type="PANTHER" id="PTHR15427:SF21">
    <property type="entry name" value="COMPLEMENT C1Q AND TUMOR NECROSIS FACTOR-RELATED PROTEIN 9A"/>
    <property type="match status" value="1"/>
</dbReference>
<dbReference type="PANTHER" id="PTHR15427">
    <property type="entry name" value="EMILIN ELASTIN MICROFIBRIL INTERFACE-LOCATED PROTEIN ELASTIN MICROFIBRIL INTERFACER"/>
    <property type="match status" value="1"/>
</dbReference>
<dbReference type="Pfam" id="PF00386">
    <property type="entry name" value="C1q"/>
    <property type="match status" value="1"/>
</dbReference>
<dbReference type="Pfam" id="PF01391">
    <property type="entry name" value="Collagen"/>
    <property type="match status" value="3"/>
</dbReference>
<dbReference type="PRINTS" id="PR00007">
    <property type="entry name" value="COMPLEMNTC1Q"/>
</dbReference>
<dbReference type="SMART" id="SM00110">
    <property type="entry name" value="C1Q"/>
    <property type="match status" value="1"/>
</dbReference>
<dbReference type="SUPFAM" id="SSF49842">
    <property type="entry name" value="TNF-like"/>
    <property type="match status" value="1"/>
</dbReference>
<dbReference type="PROSITE" id="PS50871">
    <property type="entry name" value="C1Q"/>
    <property type="match status" value="1"/>
</dbReference>
<evidence type="ECO:0000255" key="1"/>
<evidence type="ECO:0000255" key="2">
    <source>
        <dbReference type="PROSITE-ProRule" id="PRU00368"/>
    </source>
</evidence>
<evidence type="ECO:0000256" key="3">
    <source>
        <dbReference type="SAM" id="MobiDB-lite"/>
    </source>
</evidence>
<evidence type="ECO:0000269" key="4">
    <source>
    </source>
</evidence>
<evidence type="ECO:0000303" key="5">
    <source>
    </source>
</evidence>
<protein>
    <recommendedName>
        <fullName>Complement C1q and tumor necrosis factor-related protein 9</fullName>
    </recommendedName>
</protein>
<sequence>MRIWWLLLVMGACTRSVFSQDTCRQGHSGIPGNPGHNGLPGRDGRDGAKGDKGDAGEPGHPGGPGKDGIRGEKGEPGADGRVEAKGIKGDPGSRGSPGKHGPKGSIGPTGEQGLPGETGPQGQKGDKGEVGPTGPEGLMGSTGPLGPKGLPGPMGPIGKPGPRGEAGPMGPQGEPGVRGMRGWKGDRGEKGKVGEAPLVPKSAFTVGLTVISKFPPPDAPIKFDKILYNELNHYNVATGKFTCHVAGVYYFTYHITVFSRNVQVSLVKNGVKVLHTKDSYMSSEDQASGGIVQELKLGDEVWMQVTGGERFNGLFADEDDDTTFTGFLLFSSS</sequence>
<comment type="function">
    <text evidence="4">Probable adipokine. Activates AMPK, AKT, and p44/42 MAPK signaling pathways.</text>
</comment>
<comment type="subunit">
    <text evidence="4">Multimers (predominantly trimers). Interacts with ADIPOQ via the C1q domain to form a heterotrimeric complex.</text>
</comment>
<comment type="subcellular location">
    <subcellularLocation>
        <location evidence="4">Secreted</location>
    </subcellularLocation>
</comment>
<comment type="alternative products">
    <event type="alternative splicing"/>
    <isoform>
        <id>Q4ZJN1-1</id>
        <name>1</name>
        <sequence type="displayed"/>
    </isoform>
    <isoform>
        <id>Q4ZJN1-2</id>
        <name>2</name>
        <sequence type="described" ref="VSP_026218"/>
    </isoform>
</comment>
<comment type="tissue specificity">
    <text evidence="4">Expressed predominantly in adipose tissue. Females express higher levels than males.</text>
</comment>
<comment type="PTM">
    <text evidence="4">The isomeric forms of the hydroxylated amino acids could not be determined in the mass-spectrometric methods reported in PubMed:18787108 but are assumed on the basis of their occurrence in collagen-like domains.</text>
</comment>
<comment type="miscellaneous">
    <text>Overexpression of CTRP9 in obese (ob/ob) mice significantly lowered serum glucose levels.</text>
</comment>
<gene>
    <name type="primary">C1qtnf9</name>
</gene>
<organism>
    <name type="scientific">Mus musculus</name>
    <name type="common">Mouse</name>
    <dbReference type="NCBI Taxonomy" id="10090"/>
    <lineage>
        <taxon>Eukaryota</taxon>
        <taxon>Metazoa</taxon>
        <taxon>Chordata</taxon>
        <taxon>Craniata</taxon>
        <taxon>Vertebrata</taxon>
        <taxon>Euteleostomi</taxon>
        <taxon>Mammalia</taxon>
        <taxon>Eutheria</taxon>
        <taxon>Euarchontoglires</taxon>
        <taxon>Glires</taxon>
        <taxon>Rodentia</taxon>
        <taxon>Myomorpha</taxon>
        <taxon>Muroidea</taxon>
        <taxon>Muridae</taxon>
        <taxon>Murinae</taxon>
        <taxon>Mus</taxon>
        <taxon>Mus</taxon>
    </lineage>
</organism>
<name>C1QT9_MOUSE</name>
<accession>Q4ZJN1</accession>
<accession>Q8BZS3</accession>
<feature type="signal peptide" evidence="1">
    <location>
        <begin position="1"/>
        <end position="19"/>
    </location>
</feature>
<feature type="chain" id="PRO_0000291752" description="Complement C1q and tumor necrosis factor-related protein 9">
    <location>
        <begin position="20"/>
        <end position="333"/>
    </location>
</feature>
<feature type="domain" description="Collagen-like 1">
    <location>
        <begin position="24"/>
        <end position="82"/>
    </location>
</feature>
<feature type="domain" description="Collagen-like 2">
    <location>
        <begin position="84"/>
        <end position="130"/>
    </location>
</feature>
<feature type="domain" description="Collagen-like 3">
    <location>
        <begin position="134"/>
        <end position="193"/>
    </location>
</feature>
<feature type="domain" description="C1q" evidence="2">
    <location>
        <begin position="197"/>
        <end position="333"/>
    </location>
</feature>
<feature type="region of interest" description="Disordered" evidence="3">
    <location>
        <begin position="22"/>
        <end position="194"/>
    </location>
</feature>
<feature type="compositionally biased region" description="Basic and acidic residues" evidence="3">
    <location>
        <begin position="42"/>
        <end position="57"/>
    </location>
</feature>
<feature type="compositionally biased region" description="Basic and acidic residues" evidence="3">
    <location>
        <begin position="67"/>
        <end position="88"/>
    </location>
</feature>
<feature type="compositionally biased region" description="Basic and acidic residues" evidence="3">
    <location>
        <begin position="183"/>
        <end position="193"/>
    </location>
</feature>
<feature type="modified residue" description="4-hydroxyproline" evidence="4">
    <location>
        <position position="31"/>
    </location>
</feature>
<feature type="modified residue" description="4-hydroxyproline" evidence="4">
    <location>
        <position position="34"/>
    </location>
</feature>
<feature type="modified residue" description="4-hydroxyproline" evidence="4">
    <location>
        <position position="40"/>
    </location>
</feature>
<feature type="modified residue" description="4-hydroxyproline" evidence="4">
    <location>
        <position position="58"/>
    </location>
</feature>
<feature type="modified residue" description="4-hydroxyproline" evidence="4">
    <location>
        <position position="61"/>
    </location>
</feature>
<feature type="modified residue" description="4-hydroxyproline" evidence="4">
    <location>
        <position position="64"/>
    </location>
</feature>
<feature type="modified residue" description="5-hydroxylysine" evidence="4">
    <location>
        <position position="73"/>
    </location>
</feature>
<feature type="modified residue" description="4-hydroxyproline" evidence="4">
    <location>
        <position position="76"/>
    </location>
</feature>
<feature type="modified residue" description="4-hydroxyproline" evidence="4">
    <location>
        <position position="115"/>
    </location>
</feature>
<feature type="modified residue" description="5-hydroxylysine" evidence="4">
    <location>
        <position position="127"/>
    </location>
</feature>
<feature type="modified residue" description="4-hydroxyproline" evidence="4">
    <location>
        <position position="151"/>
    </location>
</feature>
<feature type="modified residue" description="4-hydroxyproline" evidence="4">
    <location>
        <position position="160"/>
    </location>
</feature>
<feature type="modified residue" description="4-hydroxyproline" evidence="4">
    <location>
        <position position="175"/>
    </location>
</feature>
<feature type="glycosylation site" description="O-linked (Gal...) hydroxylysine" evidence="4">
    <location>
        <position position="73"/>
    </location>
</feature>
<feature type="glycosylation site" description="O-linked (Gal...) hydroxylysine" evidence="4">
    <location>
        <position position="127"/>
    </location>
</feature>
<feature type="splice variant" id="VSP_026218" description="In isoform 2." evidence="5">
    <location>
        <begin position="1"/>
        <end position="138"/>
    </location>
</feature>
<feature type="mutagenesis site" description="No change in the interaction with ADIPOQ." evidence="4">
    <original>C</original>
    <variation>A</variation>
    <location>
        <position position="23"/>
    </location>
</feature>
<keyword id="KW-0025">Alternative splicing</keyword>
<keyword id="KW-0176">Collagen</keyword>
<keyword id="KW-0325">Glycoprotein</keyword>
<keyword id="KW-0372">Hormone</keyword>
<keyword id="KW-0379">Hydroxylation</keyword>
<keyword id="KW-1185">Reference proteome</keyword>
<keyword id="KW-0677">Repeat</keyword>
<keyword id="KW-0964">Secreted</keyword>
<keyword id="KW-0732">Signal</keyword>
<reference key="1">
    <citation type="journal article" date="2004" name="Proc. Natl. Acad. Sci. U.S.A.">
        <title>A family of Acrp30/adiponectin structural and functional paralogs.</title>
        <authorList>
            <person name="Wong G.W."/>
            <person name="Wang J."/>
            <person name="Hug C."/>
            <person name="Tsao T.S."/>
            <person name="Lodish H.F."/>
        </authorList>
    </citation>
    <scope>NUCLEOTIDE SEQUENCE [MRNA] (ISOFORM 1)</scope>
    <source>
        <strain>C57BL/6J</strain>
        <tissue>Adipose tissue</tissue>
    </source>
</reference>
<reference key="2">
    <citation type="journal article" date="2005" name="Science">
        <title>The transcriptional landscape of the mammalian genome.</title>
        <authorList>
            <person name="Carninci P."/>
            <person name="Kasukawa T."/>
            <person name="Katayama S."/>
            <person name="Gough J."/>
            <person name="Frith M.C."/>
            <person name="Maeda N."/>
            <person name="Oyama R."/>
            <person name="Ravasi T."/>
            <person name="Lenhard B."/>
            <person name="Wells C."/>
            <person name="Kodzius R."/>
            <person name="Shimokawa K."/>
            <person name="Bajic V.B."/>
            <person name="Brenner S.E."/>
            <person name="Batalov S."/>
            <person name="Forrest A.R."/>
            <person name="Zavolan M."/>
            <person name="Davis M.J."/>
            <person name="Wilming L.G."/>
            <person name="Aidinis V."/>
            <person name="Allen J.E."/>
            <person name="Ambesi-Impiombato A."/>
            <person name="Apweiler R."/>
            <person name="Aturaliya R.N."/>
            <person name="Bailey T.L."/>
            <person name="Bansal M."/>
            <person name="Baxter L."/>
            <person name="Beisel K.W."/>
            <person name="Bersano T."/>
            <person name="Bono H."/>
            <person name="Chalk A.M."/>
            <person name="Chiu K.P."/>
            <person name="Choudhary V."/>
            <person name="Christoffels A."/>
            <person name="Clutterbuck D.R."/>
            <person name="Crowe M.L."/>
            <person name="Dalla E."/>
            <person name="Dalrymple B.P."/>
            <person name="de Bono B."/>
            <person name="Della Gatta G."/>
            <person name="di Bernardo D."/>
            <person name="Down T."/>
            <person name="Engstrom P."/>
            <person name="Fagiolini M."/>
            <person name="Faulkner G."/>
            <person name="Fletcher C.F."/>
            <person name="Fukushima T."/>
            <person name="Furuno M."/>
            <person name="Futaki S."/>
            <person name="Gariboldi M."/>
            <person name="Georgii-Hemming P."/>
            <person name="Gingeras T.R."/>
            <person name="Gojobori T."/>
            <person name="Green R.E."/>
            <person name="Gustincich S."/>
            <person name="Harbers M."/>
            <person name="Hayashi Y."/>
            <person name="Hensch T.K."/>
            <person name="Hirokawa N."/>
            <person name="Hill D."/>
            <person name="Huminiecki L."/>
            <person name="Iacono M."/>
            <person name="Ikeo K."/>
            <person name="Iwama A."/>
            <person name="Ishikawa T."/>
            <person name="Jakt M."/>
            <person name="Kanapin A."/>
            <person name="Katoh M."/>
            <person name="Kawasawa Y."/>
            <person name="Kelso J."/>
            <person name="Kitamura H."/>
            <person name="Kitano H."/>
            <person name="Kollias G."/>
            <person name="Krishnan S.P."/>
            <person name="Kruger A."/>
            <person name="Kummerfeld S.K."/>
            <person name="Kurochkin I.V."/>
            <person name="Lareau L.F."/>
            <person name="Lazarevic D."/>
            <person name="Lipovich L."/>
            <person name="Liu J."/>
            <person name="Liuni S."/>
            <person name="McWilliam S."/>
            <person name="Madan Babu M."/>
            <person name="Madera M."/>
            <person name="Marchionni L."/>
            <person name="Matsuda H."/>
            <person name="Matsuzawa S."/>
            <person name="Miki H."/>
            <person name="Mignone F."/>
            <person name="Miyake S."/>
            <person name="Morris K."/>
            <person name="Mottagui-Tabar S."/>
            <person name="Mulder N."/>
            <person name="Nakano N."/>
            <person name="Nakauchi H."/>
            <person name="Ng P."/>
            <person name="Nilsson R."/>
            <person name="Nishiguchi S."/>
            <person name="Nishikawa S."/>
            <person name="Nori F."/>
            <person name="Ohara O."/>
            <person name="Okazaki Y."/>
            <person name="Orlando V."/>
            <person name="Pang K.C."/>
            <person name="Pavan W.J."/>
            <person name="Pavesi G."/>
            <person name="Pesole G."/>
            <person name="Petrovsky N."/>
            <person name="Piazza S."/>
            <person name="Reed J."/>
            <person name="Reid J.F."/>
            <person name="Ring B.Z."/>
            <person name="Ringwald M."/>
            <person name="Rost B."/>
            <person name="Ruan Y."/>
            <person name="Salzberg S.L."/>
            <person name="Sandelin A."/>
            <person name="Schneider C."/>
            <person name="Schoenbach C."/>
            <person name="Sekiguchi K."/>
            <person name="Semple C.A."/>
            <person name="Seno S."/>
            <person name="Sessa L."/>
            <person name="Sheng Y."/>
            <person name="Shibata Y."/>
            <person name="Shimada H."/>
            <person name="Shimada K."/>
            <person name="Silva D."/>
            <person name="Sinclair B."/>
            <person name="Sperling S."/>
            <person name="Stupka E."/>
            <person name="Sugiura K."/>
            <person name="Sultana R."/>
            <person name="Takenaka Y."/>
            <person name="Taki K."/>
            <person name="Tammoja K."/>
            <person name="Tan S.L."/>
            <person name="Tang S."/>
            <person name="Taylor M.S."/>
            <person name="Tegner J."/>
            <person name="Teichmann S.A."/>
            <person name="Ueda H.R."/>
            <person name="van Nimwegen E."/>
            <person name="Verardo R."/>
            <person name="Wei C.L."/>
            <person name="Yagi K."/>
            <person name="Yamanishi H."/>
            <person name="Zabarovsky E."/>
            <person name="Zhu S."/>
            <person name="Zimmer A."/>
            <person name="Hide W."/>
            <person name="Bult C."/>
            <person name="Grimmond S.M."/>
            <person name="Teasdale R.D."/>
            <person name="Liu E.T."/>
            <person name="Brusic V."/>
            <person name="Quackenbush J."/>
            <person name="Wahlestedt C."/>
            <person name="Mattick J.S."/>
            <person name="Hume D.A."/>
            <person name="Kai C."/>
            <person name="Sasaki D."/>
            <person name="Tomaru Y."/>
            <person name="Fukuda S."/>
            <person name="Kanamori-Katayama M."/>
            <person name="Suzuki M."/>
            <person name="Aoki J."/>
            <person name="Arakawa T."/>
            <person name="Iida J."/>
            <person name="Imamura K."/>
            <person name="Itoh M."/>
            <person name="Kato T."/>
            <person name="Kawaji H."/>
            <person name="Kawagashira N."/>
            <person name="Kawashima T."/>
            <person name="Kojima M."/>
            <person name="Kondo S."/>
            <person name="Konno H."/>
            <person name="Nakano K."/>
            <person name="Ninomiya N."/>
            <person name="Nishio T."/>
            <person name="Okada M."/>
            <person name="Plessy C."/>
            <person name="Shibata K."/>
            <person name="Shiraki T."/>
            <person name="Suzuki S."/>
            <person name="Tagami M."/>
            <person name="Waki K."/>
            <person name="Watahiki A."/>
            <person name="Okamura-Oho Y."/>
            <person name="Suzuki H."/>
            <person name="Kawai J."/>
            <person name="Hayashizaki Y."/>
        </authorList>
    </citation>
    <scope>NUCLEOTIDE SEQUENCE [LARGE SCALE MRNA] (ISOFORM 2)</scope>
    <source>
        <strain>C57BL/6J</strain>
        <tissue>Cecum</tissue>
    </source>
</reference>
<reference key="3">
    <citation type="journal article" date="2004" name="Genome Res.">
        <title>The status, quality, and expansion of the NIH full-length cDNA project: the Mammalian Gene Collection (MGC).</title>
        <authorList>
            <consortium name="The MGC Project Team"/>
        </authorList>
    </citation>
    <scope>NUCLEOTIDE SEQUENCE [LARGE SCALE MRNA] (ISOFORM 1)</scope>
</reference>
<reference key="4">
    <citation type="journal article" date="2009" name="FASEB J.">
        <title>Identification and characterization of CTRP9, a novel secreted glycoprotein, from adipose tissue that reduces serum glucose in mice and forms heterotrimers with adiponectin.</title>
        <authorList>
            <person name="Wong G.W."/>
            <person name="Krawczyk S.A."/>
            <person name="Kitidis-Mitrokostas C."/>
            <person name="Ge G."/>
            <person name="Spooner E."/>
            <person name="Hug C."/>
            <person name="Gimeno R."/>
            <person name="Lodish H.F."/>
        </authorList>
    </citation>
    <scope>FUNCTION</scope>
    <scope>INTERACTION WITH ADIPOQ</scope>
    <scope>SUBCELLULAR LOCATION</scope>
    <scope>TISSUE SPECIFICITY</scope>
    <scope>GLYCOSYLATION AT LYS-73 AND LYS-127</scope>
    <scope>HYDROXYLATION AT PRO-31; PRO-34; PRO-40; PRO-58; PRO-61; PRO-64; LYS-73; PRO-76; PRO-115; LYS-127; PRO-151; PRO-160 AND PRO-175</scope>
    <scope>MUTAGENESIS OF CYS-23</scope>
    <scope>IDENTIFICATION BY MASS SPECTROMETRY</scope>
</reference>
<proteinExistence type="evidence at protein level"/>